<sequence>MPELPEVETTRRGIAPHLEGQRVSRVIVRDGRLRWPVPEDLDIRLSGQRIVQVSRRAKYLLIQAEVGTLISHLGMSGNLRLVEAGLAALKHEHVDIELESGLALRYTDPRRFGAMLWSHDPHNHELLIRLGPEPLTDLFDGERLYERSRGKSIAVKPFIMDNAVVVGVGNIYATEALFAAGIDPRREARGISRARYLKLAIEIKRILAYAIERGGTTLRDFIGGDGKPGYFQQELFAYGRGGQPCKVCGTTLREIKLGQRASVYCPKCQR</sequence>
<proteinExistence type="inferred from homology"/>
<comment type="function">
    <text evidence="2">Involved in base excision repair of DNA damaged by oxidation or by mutagenic agents. Acts as a DNA glycosylase that recognizes and removes damaged bases. Has a preference for oxidized purines, such as 7,8-dihydro-8-oxoguanine (8-oxoG). Has AP (apurinic/apyrimidinic) lyase activity and introduces nicks in the DNA strand. Cleaves the DNA backbone by beta-delta elimination to generate a single-strand break at the site of the removed base with both 3'- and 5'-phosphates.</text>
</comment>
<comment type="catalytic activity">
    <reaction evidence="2">
        <text>Hydrolysis of DNA containing ring-opened 7-methylguanine residues, releasing 2,6-diamino-4-hydroxy-5-(N-methyl)formamidopyrimidine.</text>
        <dbReference type="EC" id="3.2.2.23"/>
    </reaction>
</comment>
<comment type="catalytic activity">
    <reaction evidence="2">
        <text>2'-deoxyribonucleotide-(2'-deoxyribose 5'-phosphate)-2'-deoxyribonucleotide-DNA = a 3'-end 2'-deoxyribonucleotide-(2,3-dehydro-2,3-deoxyribose 5'-phosphate)-DNA + a 5'-end 5'-phospho-2'-deoxyribonucleoside-DNA + H(+)</text>
        <dbReference type="Rhea" id="RHEA:66592"/>
        <dbReference type="Rhea" id="RHEA-COMP:13180"/>
        <dbReference type="Rhea" id="RHEA-COMP:16897"/>
        <dbReference type="Rhea" id="RHEA-COMP:17067"/>
        <dbReference type="ChEBI" id="CHEBI:15378"/>
        <dbReference type="ChEBI" id="CHEBI:136412"/>
        <dbReference type="ChEBI" id="CHEBI:157695"/>
        <dbReference type="ChEBI" id="CHEBI:167181"/>
        <dbReference type="EC" id="4.2.99.18"/>
    </reaction>
</comment>
<comment type="cofactor">
    <cofactor evidence="2">
        <name>Zn(2+)</name>
        <dbReference type="ChEBI" id="CHEBI:29105"/>
    </cofactor>
    <text evidence="2">Binds 1 zinc ion per subunit.</text>
</comment>
<comment type="subunit">
    <text evidence="2">Monomer.</text>
</comment>
<comment type="similarity">
    <text evidence="2">Belongs to the FPG family.</text>
</comment>
<keyword id="KW-0227">DNA damage</keyword>
<keyword id="KW-0234">DNA repair</keyword>
<keyword id="KW-0238">DNA-binding</keyword>
<keyword id="KW-0326">Glycosidase</keyword>
<keyword id="KW-0378">Hydrolase</keyword>
<keyword id="KW-0456">Lyase</keyword>
<keyword id="KW-0479">Metal-binding</keyword>
<keyword id="KW-0511">Multifunctional enzyme</keyword>
<keyword id="KW-1185">Reference proteome</keyword>
<keyword id="KW-0862">Zinc</keyword>
<keyword id="KW-0863">Zinc-finger</keyword>
<dbReference type="EC" id="3.2.2.23" evidence="2"/>
<dbReference type="EC" id="4.2.99.18" evidence="2"/>
<dbReference type="EMBL" id="AE016853">
    <property type="protein sequence ID" value="AAO53958.1"/>
    <property type="molecule type" value="Genomic_DNA"/>
</dbReference>
<dbReference type="RefSeq" id="NP_790263.1">
    <property type="nucleotide sequence ID" value="NC_004578.1"/>
</dbReference>
<dbReference type="RefSeq" id="WP_005763611.1">
    <property type="nucleotide sequence ID" value="NC_004578.1"/>
</dbReference>
<dbReference type="SMR" id="Q88AH6"/>
<dbReference type="STRING" id="223283.PSPTO_0414"/>
<dbReference type="GeneID" id="1182023"/>
<dbReference type="KEGG" id="pst:PSPTO_0414"/>
<dbReference type="PATRIC" id="fig|223283.9.peg.434"/>
<dbReference type="eggNOG" id="COG0266">
    <property type="taxonomic scope" value="Bacteria"/>
</dbReference>
<dbReference type="HOGENOM" id="CLU_038423_1_1_6"/>
<dbReference type="OrthoDB" id="9800855at2"/>
<dbReference type="PhylomeDB" id="Q88AH6"/>
<dbReference type="BRENDA" id="3.2.2.23">
    <property type="organism ID" value="399"/>
</dbReference>
<dbReference type="Proteomes" id="UP000002515">
    <property type="component" value="Chromosome"/>
</dbReference>
<dbReference type="GO" id="GO:0034039">
    <property type="term" value="F:8-oxo-7,8-dihydroguanine DNA N-glycosylase activity"/>
    <property type="evidence" value="ECO:0007669"/>
    <property type="project" value="TreeGrafter"/>
</dbReference>
<dbReference type="GO" id="GO:0140078">
    <property type="term" value="F:class I DNA-(apurinic or apyrimidinic site) endonuclease activity"/>
    <property type="evidence" value="ECO:0007669"/>
    <property type="project" value="UniProtKB-EC"/>
</dbReference>
<dbReference type="GO" id="GO:0003684">
    <property type="term" value="F:damaged DNA binding"/>
    <property type="evidence" value="ECO:0007669"/>
    <property type="project" value="InterPro"/>
</dbReference>
<dbReference type="GO" id="GO:0008270">
    <property type="term" value="F:zinc ion binding"/>
    <property type="evidence" value="ECO:0007669"/>
    <property type="project" value="UniProtKB-UniRule"/>
</dbReference>
<dbReference type="GO" id="GO:0006284">
    <property type="term" value="P:base-excision repair"/>
    <property type="evidence" value="ECO:0007669"/>
    <property type="project" value="InterPro"/>
</dbReference>
<dbReference type="CDD" id="cd08966">
    <property type="entry name" value="EcFpg-like_N"/>
    <property type="match status" value="1"/>
</dbReference>
<dbReference type="FunFam" id="1.10.8.50:FF:000003">
    <property type="entry name" value="Formamidopyrimidine-DNA glycosylase"/>
    <property type="match status" value="1"/>
</dbReference>
<dbReference type="FunFam" id="3.20.190.10:FF:000001">
    <property type="entry name" value="Formamidopyrimidine-DNA glycosylase"/>
    <property type="match status" value="1"/>
</dbReference>
<dbReference type="Gene3D" id="1.10.8.50">
    <property type="match status" value="1"/>
</dbReference>
<dbReference type="Gene3D" id="3.20.190.10">
    <property type="entry name" value="MutM-like, N-terminal"/>
    <property type="match status" value="1"/>
</dbReference>
<dbReference type="HAMAP" id="MF_00103">
    <property type="entry name" value="Fapy_DNA_glycosyl"/>
    <property type="match status" value="1"/>
</dbReference>
<dbReference type="InterPro" id="IPR015886">
    <property type="entry name" value="DNA_glyclase/AP_lyase_DNA-bd"/>
</dbReference>
<dbReference type="InterPro" id="IPR015887">
    <property type="entry name" value="DNA_glyclase_Znf_dom_DNA_BS"/>
</dbReference>
<dbReference type="InterPro" id="IPR020629">
    <property type="entry name" value="Formamido-pyr_DNA_Glyclase"/>
</dbReference>
<dbReference type="InterPro" id="IPR012319">
    <property type="entry name" value="FPG_cat"/>
</dbReference>
<dbReference type="InterPro" id="IPR035937">
    <property type="entry name" value="MutM-like_N-ter"/>
</dbReference>
<dbReference type="InterPro" id="IPR010979">
    <property type="entry name" value="Ribosomal_uS13-like_H2TH"/>
</dbReference>
<dbReference type="InterPro" id="IPR000214">
    <property type="entry name" value="Znf_DNA_glyclase/AP_lyase"/>
</dbReference>
<dbReference type="InterPro" id="IPR010663">
    <property type="entry name" value="Znf_FPG/IleRS"/>
</dbReference>
<dbReference type="NCBIfam" id="TIGR00577">
    <property type="entry name" value="fpg"/>
    <property type="match status" value="1"/>
</dbReference>
<dbReference type="NCBIfam" id="NF002211">
    <property type="entry name" value="PRK01103.1"/>
    <property type="match status" value="1"/>
</dbReference>
<dbReference type="PANTHER" id="PTHR22993">
    <property type="entry name" value="FORMAMIDOPYRIMIDINE-DNA GLYCOSYLASE"/>
    <property type="match status" value="1"/>
</dbReference>
<dbReference type="PANTHER" id="PTHR22993:SF9">
    <property type="entry name" value="FORMAMIDOPYRIMIDINE-DNA GLYCOSYLASE"/>
    <property type="match status" value="1"/>
</dbReference>
<dbReference type="Pfam" id="PF01149">
    <property type="entry name" value="Fapy_DNA_glyco"/>
    <property type="match status" value="1"/>
</dbReference>
<dbReference type="Pfam" id="PF06831">
    <property type="entry name" value="H2TH"/>
    <property type="match status" value="1"/>
</dbReference>
<dbReference type="Pfam" id="PF06827">
    <property type="entry name" value="zf-FPG_IleRS"/>
    <property type="match status" value="1"/>
</dbReference>
<dbReference type="SMART" id="SM00898">
    <property type="entry name" value="Fapy_DNA_glyco"/>
    <property type="match status" value="1"/>
</dbReference>
<dbReference type="SMART" id="SM01232">
    <property type="entry name" value="H2TH"/>
    <property type="match status" value="1"/>
</dbReference>
<dbReference type="SUPFAM" id="SSF57716">
    <property type="entry name" value="Glucocorticoid receptor-like (DNA-binding domain)"/>
    <property type="match status" value="1"/>
</dbReference>
<dbReference type="SUPFAM" id="SSF81624">
    <property type="entry name" value="N-terminal domain of MutM-like DNA repair proteins"/>
    <property type="match status" value="1"/>
</dbReference>
<dbReference type="SUPFAM" id="SSF46946">
    <property type="entry name" value="S13-like H2TH domain"/>
    <property type="match status" value="1"/>
</dbReference>
<dbReference type="PROSITE" id="PS51068">
    <property type="entry name" value="FPG_CAT"/>
    <property type="match status" value="1"/>
</dbReference>
<dbReference type="PROSITE" id="PS01242">
    <property type="entry name" value="ZF_FPG_1"/>
    <property type="match status" value="1"/>
</dbReference>
<dbReference type="PROSITE" id="PS51066">
    <property type="entry name" value="ZF_FPG_2"/>
    <property type="match status" value="1"/>
</dbReference>
<gene>
    <name evidence="2" type="primary">mutM</name>
    <name evidence="2" type="synonym">fpg</name>
    <name type="ordered locus">PSPTO_0414</name>
</gene>
<accession>Q88AH6</accession>
<organism>
    <name type="scientific">Pseudomonas syringae pv. tomato (strain ATCC BAA-871 / DC3000)</name>
    <dbReference type="NCBI Taxonomy" id="223283"/>
    <lineage>
        <taxon>Bacteria</taxon>
        <taxon>Pseudomonadati</taxon>
        <taxon>Pseudomonadota</taxon>
        <taxon>Gammaproteobacteria</taxon>
        <taxon>Pseudomonadales</taxon>
        <taxon>Pseudomonadaceae</taxon>
        <taxon>Pseudomonas</taxon>
    </lineage>
</organism>
<reference key="1">
    <citation type="journal article" date="2003" name="Proc. Natl. Acad. Sci. U.S.A.">
        <title>The complete genome sequence of the Arabidopsis and tomato pathogen Pseudomonas syringae pv. tomato DC3000.</title>
        <authorList>
            <person name="Buell C.R."/>
            <person name="Joardar V."/>
            <person name="Lindeberg M."/>
            <person name="Selengut J."/>
            <person name="Paulsen I.T."/>
            <person name="Gwinn M.L."/>
            <person name="Dodson R.J."/>
            <person name="DeBoy R.T."/>
            <person name="Durkin A.S."/>
            <person name="Kolonay J.F."/>
            <person name="Madupu R."/>
            <person name="Daugherty S.C."/>
            <person name="Brinkac L.M."/>
            <person name="Beanan M.J."/>
            <person name="Haft D.H."/>
            <person name="Nelson W.C."/>
            <person name="Davidsen T.M."/>
            <person name="Zafar N."/>
            <person name="Zhou L."/>
            <person name="Liu J."/>
            <person name="Yuan Q."/>
            <person name="Khouri H.M."/>
            <person name="Fedorova N.B."/>
            <person name="Tran B."/>
            <person name="Russell D."/>
            <person name="Berry K.J."/>
            <person name="Utterback T.R."/>
            <person name="Van Aken S.E."/>
            <person name="Feldblyum T.V."/>
            <person name="D'Ascenzo M."/>
            <person name="Deng W.-L."/>
            <person name="Ramos A.R."/>
            <person name="Alfano J.R."/>
            <person name="Cartinhour S."/>
            <person name="Chatterjee A.K."/>
            <person name="Delaney T.P."/>
            <person name="Lazarowitz S.G."/>
            <person name="Martin G.B."/>
            <person name="Schneider D.J."/>
            <person name="Tang X."/>
            <person name="Bender C.L."/>
            <person name="White O."/>
            <person name="Fraser C.M."/>
            <person name="Collmer A."/>
        </authorList>
    </citation>
    <scope>NUCLEOTIDE SEQUENCE [LARGE SCALE GENOMIC DNA]</scope>
    <source>
        <strain>ATCC BAA-871 / DC3000</strain>
    </source>
</reference>
<name>FPG_PSESM</name>
<evidence type="ECO:0000250" key="1"/>
<evidence type="ECO:0000255" key="2">
    <source>
        <dbReference type="HAMAP-Rule" id="MF_00103"/>
    </source>
</evidence>
<feature type="initiator methionine" description="Removed" evidence="1">
    <location>
        <position position="1"/>
    </location>
</feature>
<feature type="chain" id="PRO_0000170854" description="Formamidopyrimidine-DNA glycosylase">
    <location>
        <begin position="2"/>
        <end position="270"/>
    </location>
</feature>
<feature type="zinc finger region" description="FPG-type" evidence="2">
    <location>
        <begin position="236"/>
        <end position="270"/>
    </location>
</feature>
<feature type="active site" description="Schiff-base intermediate with DNA" evidence="2">
    <location>
        <position position="2"/>
    </location>
</feature>
<feature type="active site" description="Proton donor" evidence="2">
    <location>
        <position position="3"/>
    </location>
</feature>
<feature type="active site" description="Proton donor; for beta-elimination activity" evidence="2">
    <location>
        <position position="58"/>
    </location>
</feature>
<feature type="active site" description="Proton donor; for delta-elimination activity" evidence="2">
    <location>
        <position position="260"/>
    </location>
</feature>
<feature type="binding site" evidence="2">
    <location>
        <position position="91"/>
    </location>
    <ligand>
        <name>DNA</name>
        <dbReference type="ChEBI" id="CHEBI:16991"/>
    </ligand>
</feature>
<feature type="binding site" evidence="2">
    <location>
        <position position="110"/>
    </location>
    <ligand>
        <name>DNA</name>
        <dbReference type="ChEBI" id="CHEBI:16991"/>
    </ligand>
</feature>
<feature type="binding site" evidence="2">
    <location>
        <position position="151"/>
    </location>
    <ligand>
        <name>DNA</name>
        <dbReference type="ChEBI" id="CHEBI:16991"/>
    </ligand>
</feature>
<protein>
    <recommendedName>
        <fullName evidence="2">Formamidopyrimidine-DNA glycosylase</fullName>
        <shortName evidence="2">Fapy-DNA glycosylase</shortName>
        <ecNumber evidence="2">3.2.2.23</ecNumber>
    </recommendedName>
    <alternativeName>
        <fullName evidence="2">DNA-(apurinic or apyrimidinic site) lyase MutM</fullName>
        <shortName evidence="2">AP lyase MutM</shortName>
        <ecNumber evidence="2">4.2.99.18</ecNumber>
    </alternativeName>
</protein>